<accession>Q2FXZ1</accession>
<evidence type="ECO:0000255" key="1">
    <source>
        <dbReference type="HAMAP-Rule" id="MF_01151"/>
    </source>
</evidence>
<evidence type="ECO:0000256" key="2">
    <source>
        <dbReference type="SAM" id="MobiDB-lite"/>
    </source>
</evidence>
<sequence length="208" mass="24008">MTNKDESVEKNTESTVEETNVKQNIDDSVEQAEESKGHLQDEAIEETSDENVIEEIDPKDQKINELQQLADENEEKYLRLYAEFENYKRRIQKENEINKTYQAQRVLTDILPAIDNIERALQIEGDDETFKSLQKGVQMVHESLINALKDNGLEVIKTEGEAFDPNIHQAVVQDDNPDFESGEITQELQKGYKLKDRVLRPSMVKVNQ</sequence>
<gene>
    <name evidence="1" type="primary">grpE</name>
    <name type="ordered locus">SAOUHSC_01684</name>
</gene>
<comment type="function">
    <text evidence="1">Participates actively in the response to hyperosmotic and heat shock by preventing the aggregation of stress-denatured proteins, in association with DnaK and GrpE. It is the nucleotide exchange factor for DnaK and may function as a thermosensor. Unfolded proteins bind initially to DnaJ; upon interaction with the DnaJ-bound protein, DnaK hydrolyzes its bound ATP, resulting in the formation of a stable complex. GrpE releases ADP from DnaK; ATP binding to DnaK triggers the release of the substrate protein, thus completing the reaction cycle. Several rounds of ATP-dependent interactions between DnaJ, DnaK and GrpE are required for fully efficient folding.</text>
</comment>
<comment type="subunit">
    <text evidence="1">Homodimer.</text>
</comment>
<comment type="subcellular location">
    <subcellularLocation>
        <location evidence="1">Cytoplasm</location>
    </subcellularLocation>
</comment>
<comment type="similarity">
    <text evidence="1">Belongs to the GrpE family.</text>
</comment>
<proteinExistence type="inferred from homology"/>
<name>GRPE_STAA8</name>
<keyword id="KW-0143">Chaperone</keyword>
<keyword id="KW-0963">Cytoplasm</keyword>
<keyword id="KW-1185">Reference proteome</keyword>
<keyword id="KW-0346">Stress response</keyword>
<organism>
    <name type="scientific">Staphylococcus aureus (strain NCTC 8325 / PS 47)</name>
    <dbReference type="NCBI Taxonomy" id="93061"/>
    <lineage>
        <taxon>Bacteria</taxon>
        <taxon>Bacillati</taxon>
        <taxon>Bacillota</taxon>
        <taxon>Bacilli</taxon>
        <taxon>Bacillales</taxon>
        <taxon>Staphylococcaceae</taxon>
        <taxon>Staphylococcus</taxon>
    </lineage>
</organism>
<reference key="1">
    <citation type="book" date="2006" name="Gram positive pathogens, 2nd edition">
        <title>The Staphylococcus aureus NCTC 8325 genome.</title>
        <editorList>
            <person name="Fischetti V."/>
            <person name="Novick R."/>
            <person name="Ferretti J."/>
            <person name="Portnoy D."/>
            <person name="Rood J."/>
        </editorList>
        <authorList>
            <person name="Gillaspy A.F."/>
            <person name="Worrell V."/>
            <person name="Orvis J."/>
            <person name="Roe B.A."/>
            <person name="Dyer D.W."/>
            <person name="Iandolo J.J."/>
        </authorList>
    </citation>
    <scope>NUCLEOTIDE SEQUENCE [LARGE SCALE GENOMIC DNA]</scope>
    <source>
        <strain>NCTC 8325 / PS 47</strain>
    </source>
</reference>
<feature type="chain" id="PRO_1000053647" description="Protein GrpE">
    <location>
        <begin position="1"/>
        <end position="208"/>
    </location>
</feature>
<feature type="region of interest" description="Disordered" evidence="2">
    <location>
        <begin position="1"/>
        <end position="51"/>
    </location>
</feature>
<feature type="compositionally biased region" description="Basic and acidic residues" evidence="2">
    <location>
        <begin position="1"/>
        <end position="12"/>
    </location>
</feature>
<feature type="compositionally biased region" description="Polar residues" evidence="2">
    <location>
        <begin position="13"/>
        <end position="23"/>
    </location>
</feature>
<feature type="compositionally biased region" description="Acidic residues" evidence="2">
    <location>
        <begin position="42"/>
        <end position="51"/>
    </location>
</feature>
<dbReference type="EMBL" id="CP000253">
    <property type="protein sequence ID" value="ABD30758.1"/>
    <property type="molecule type" value="Genomic_DNA"/>
</dbReference>
<dbReference type="RefSeq" id="WP_000182215.1">
    <property type="nucleotide sequence ID" value="NZ_LS483365.1"/>
</dbReference>
<dbReference type="RefSeq" id="YP_500194.1">
    <property type="nucleotide sequence ID" value="NC_007795.1"/>
</dbReference>
<dbReference type="SMR" id="Q2FXZ1"/>
<dbReference type="STRING" id="93061.SAOUHSC_01684"/>
<dbReference type="PaxDb" id="1280-SAXN108_1607"/>
<dbReference type="GeneID" id="3921796"/>
<dbReference type="KEGG" id="sao:SAOUHSC_01684"/>
<dbReference type="PATRIC" id="fig|93061.5.peg.1532"/>
<dbReference type="eggNOG" id="COG0576">
    <property type="taxonomic scope" value="Bacteria"/>
</dbReference>
<dbReference type="HOGENOM" id="CLU_057217_6_3_9"/>
<dbReference type="OrthoDB" id="9812586at2"/>
<dbReference type="PRO" id="PR:Q2FXZ1"/>
<dbReference type="Proteomes" id="UP000008816">
    <property type="component" value="Chromosome"/>
</dbReference>
<dbReference type="GO" id="GO:0005737">
    <property type="term" value="C:cytoplasm"/>
    <property type="evidence" value="ECO:0007669"/>
    <property type="project" value="UniProtKB-SubCell"/>
</dbReference>
<dbReference type="GO" id="GO:0000774">
    <property type="term" value="F:adenyl-nucleotide exchange factor activity"/>
    <property type="evidence" value="ECO:0000318"/>
    <property type="project" value="GO_Central"/>
</dbReference>
<dbReference type="GO" id="GO:0042803">
    <property type="term" value="F:protein homodimerization activity"/>
    <property type="evidence" value="ECO:0007669"/>
    <property type="project" value="InterPro"/>
</dbReference>
<dbReference type="GO" id="GO:0051087">
    <property type="term" value="F:protein-folding chaperone binding"/>
    <property type="evidence" value="ECO:0007669"/>
    <property type="project" value="InterPro"/>
</dbReference>
<dbReference type="GO" id="GO:0051082">
    <property type="term" value="F:unfolded protein binding"/>
    <property type="evidence" value="ECO:0000318"/>
    <property type="project" value="GO_Central"/>
</dbReference>
<dbReference type="GO" id="GO:0006457">
    <property type="term" value="P:protein folding"/>
    <property type="evidence" value="ECO:0007669"/>
    <property type="project" value="InterPro"/>
</dbReference>
<dbReference type="CDD" id="cd00446">
    <property type="entry name" value="GrpE"/>
    <property type="match status" value="1"/>
</dbReference>
<dbReference type="FunFam" id="2.30.22.10:FF:000001">
    <property type="entry name" value="Protein GrpE"/>
    <property type="match status" value="1"/>
</dbReference>
<dbReference type="FunFam" id="3.90.20.20:FF:000002">
    <property type="entry name" value="Protein GrpE"/>
    <property type="match status" value="1"/>
</dbReference>
<dbReference type="Gene3D" id="3.90.20.20">
    <property type="match status" value="1"/>
</dbReference>
<dbReference type="Gene3D" id="2.30.22.10">
    <property type="entry name" value="Head domain of nucleotide exchange factor GrpE"/>
    <property type="match status" value="1"/>
</dbReference>
<dbReference type="HAMAP" id="MF_01151">
    <property type="entry name" value="GrpE"/>
    <property type="match status" value="1"/>
</dbReference>
<dbReference type="InterPro" id="IPR000740">
    <property type="entry name" value="GrpE"/>
</dbReference>
<dbReference type="InterPro" id="IPR013805">
    <property type="entry name" value="GrpE_coiled_coil"/>
</dbReference>
<dbReference type="InterPro" id="IPR009012">
    <property type="entry name" value="GrpE_head"/>
</dbReference>
<dbReference type="NCBIfam" id="NF010738">
    <property type="entry name" value="PRK14140.1"/>
    <property type="match status" value="1"/>
</dbReference>
<dbReference type="PANTHER" id="PTHR21237">
    <property type="entry name" value="GRPE PROTEIN"/>
    <property type="match status" value="1"/>
</dbReference>
<dbReference type="PANTHER" id="PTHR21237:SF23">
    <property type="entry name" value="GRPE PROTEIN HOMOLOG, MITOCHONDRIAL"/>
    <property type="match status" value="1"/>
</dbReference>
<dbReference type="Pfam" id="PF01025">
    <property type="entry name" value="GrpE"/>
    <property type="match status" value="1"/>
</dbReference>
<dbReference type="PRINTS" id="PR00773">
    <property type="entry name" value="GRPEPROTEIN"/>
</dbReference>
<dbReference type="SUPFAM" id="SSF58014">
    <property type="entry name" value="Coiled-coil domain of nucleotide exchange factor GrpE"/>
    <property type="match status" value="1"/>
</dbReference>
<dbReference type="SUPFAM" id="SSF51064">
    <property type="entry name" value="Head domain of nucleotide exchange factor GrpE"/>
    <property type="match status" value="1"/>
</dbReference>
<dbReference type="PROSITE" id="PS01071">
    <property type="entry name" value="GRPE"/>
    <property type="match status" value="1"/>
</dbReference>
<protein>
    <recommendedName>
        <fullName evidence="1">Protein GrpE</fullName>
    </recommendedName>
    <alternativeName>
        <fullName evidence="1">HSP-70 cofactor</fullName>
    </alternativeName>
</protein>